<accession>P30207</accession>
<evidence type="ECO:0000250" key="1"/>
<evidence type="ECO:0000255" key="2"/>
<evidence type="ECO:0000305" key="3"/>
<protein>
    <recommendedName>
        <fullName>Spike glycoprotein</fullName>
        <shortName>S glycoprotein</shortName>
    </recommendedName>
    <alternativeName>
        <fullName>E2</fullName>
    </alternativeName>
    <alternativeName>
        <fullName>Peplomer protein</fullName>
    </alternativeName>
    <component>
        <recommendedName>
            <fullName>Spike protein S1</fullName>
        </recommendedName>
    </component>
</protein>
<dbReference type="EMBL" id="X58066">
    <property type="protein sequence ID" value="CAA41097.1"/>
    <property type="molecule type" value="Genomic_RNA"/>
</dbReference>
<dbReference type="PIR" id="S14599">
    <property type="entry name" value="S14599"/>
</dbReference>
<dbReference type="SMR" id="P30207"/>
<dbReference type="GlyCosmos" id="P30207">
    <property type="glycosylation" value="19 sites, No reported glycans"/>
</dbReference>
<dbReference type="GO" id="GO:0044173">
    <property type="term" value="C:host cell endoplasmic reticulum-Golgi intermediate compartment membrane"/>
    <property type="evidence" value="ECO:0007669"/>
    <property type="project" value="UniProtKB-SubCell"/>
</dbReference>
<dbReference type="GO" id="GO:0016020">
    <property type="term" value="C:membrane"/>
    <property type="evidence" value="ECO:0007669"/>
    <property type="project" value="UniProtKB-KW"/>
</dbReference>
<dbReference type="GO" id="GO:0019031">
    <property type="term" value="C:viral envelope"/>
    <property type="evidence" value="ECO:0007669"/>
    <property type="project" value="UniProtKB-KW"/>
</dbReference>
<dbReference type="GO" id="GO:0055036">
    <property type="term" value="C:virion membrane"/>
    <property type="evidence" value="ECO:0007669"/>
    <property type="project" value="UniProtKB-SubCell"/>
</dbReference>
<dbReference type="GO" id="GO:0075509">
    <property type="term" value="P:endocytosis involved in viral entry into host cell"/>
    <property type="evidence" value="ECO:0007669"/>
    <property type="project" value="UniProtKB-KW"/>
</dbReference>
<dbReference type="GO" id="GO:0039654">
    <property type="term" value="P:fusion of virus membrane with host endosome membrane"/>
    <property type="evidence" value="ECO:0007669"/>
    <property type="project" value="UniProtKB-KW"/>
</dbReference>
<dbReference type="GO" id="GO:0019062">
    <property type="term" value="P:virion attachment to host cell"/>
    <property type="evidence" value="ECO:0007669"/>
    <property type="project" value="UniProtKB-KW"/>
</dbReference>
<dbReference type="InterPro" id="IPR043607">
    <property type="entry name" value="CoV_S1_C"/>
</dbReference>
<dbReference type="Pfam" id="PF19209">
    <property type="entry name" value="CoV_S1_C"/>
    <property type="match status" value="1"/>
</dbReference>
<sequence length="520" mass="57762">NLFGNNSYVYYYQSAFRPPDGWHLHGGAYEVVNVSTEFSNAGTTGCTAGAIYWSKNFSAASVAMTAPQNGMSWSTQEFCTAHCNFTDFVVFVTHCYKSGHGFCPLTGLIPQNYIRISAMKNSSLFYNLTVAVTKYPRFKSLQCVNNMTSVYLNGDLVFTSNETKDVSAAGVHFKAGGPITYKVMREVKALAYFVNGTAQDVILCDGSPTGLLACQYNTGNFSDGFYPFTNSSLVKEKFIVYRESSVNTTLELTNFTFSNVSNATPNTGGVQTIQLYQTITAQSGYYNLNFSFLSSFIYKASDYMYGSYHPRCKFRLETINNGLWFNSLSVSLGYGPIQGGCKQSVFENRATCCYAYSYNGPSLCKGVYRGELTKSFECGLLVFVTKTDGSRIQIRNEPLTLTQHNYNNITLDRCVEYNIYGRVGQGFITNVTNYAINYNYLADGGMAILDTSGAIDIFVVQGEYGLNYYKVNPCEDVNQQFVVSGGKLVGILTSRNETGSQPLENQFYIKIINGTRRSRR</sequence>
<name>SPIKE_IBVU2</name>
<reference key="1">
    <citation type="submission" date="1991-03" db="EMBL/GenBank/DDBJ databases">
        <authorList>
            <person name="Cavanagh D."/>
            <person name="Davis P.J."/>
            <person name="Cook J.K.A."/>
            <person name="Li D."/>
            <person name="Kant A."/>
            <person name="Koch G."/>
        </authorList>
    </citation>
    <scope>NUCLEOTIDE SEQUENCE [GENOMIC RNA]</scope>
</reference>
<comment type="function">
    <text>S1 attaches the virion to the cell membrane by interacting with cell receptors, initiating the infection.</text>
</comment>
<comment type="subunit">
    <text evidence="1">Homotrimer; each monomer consists of a S1 and a S2 subunit. The resulting peplomers protrude from the virus surface as spikes (By similarity).</text>
</comment>
<comment type="subcellular location">
    <molecule>Spike protein S1</molecule>
    <subcellularLocation>
        <location evidence="1">Virion membrane</location>
        <topology evidence="1">Peripheral membrane protein</topology>
    </subcellularLocation>
    <subcellularLocation>
        <location evidence="1">Host endoplasmic reticulum-Golgi intermediate compartment membrane</location>
        <topology evidence="1">Peripheral membrane protein</topology>
    </subcellularLocation>
    <text evidence="1">Accumulates in the endoplasmic reticulum-Golgi intermediate compartment, where it participates in virus particle assembly. S1 is not anchored to the viral envelope, but associates with the extravirion surface through its binding to S2 (By similarity).</text>
</comment>
<comment type="PTM">
    <text evidence="1">Specific enzymatic cleavages in vivo yield mature proteins. The precursor is processed into S1 and S2 by host cell furin or furin-like protease to yield the mature S1 and S2 proteins. The cleavage site between S1 and S2 requires the optimal sequence [KR]-X-[KR]-R. Cleavage is not necessary for virus-cell fusion (By similarity).</text>
</comment>
<comment type="similarity">
    <text evidence="3">Belongs to the coronaviruses spike protein family.</text>
</comment>
<organismHost>
    <name type="scientific">Gallus gallus</name>
    <name type="common">Chicken</name>
    <dbReference type="NCBI Taxonomy" id="9031"/>
</organismHost>
<gene>
    <name type="primary">S</name>
    <name type="ORF">2</name>
</gene>
<proteinExistence type="inferred from homology"/>
<keyword id="KW-0165">Cleavage on pair of basic residues</keyword>
<keyword id="KW-1170">Fusion of virus membrane with host endosomal membrane</keyword>
<keyword id="KW-1168">Fusion of virus membrane with host membrane</keyword>
<keyword id="KW-0325">Glycoprotein</keyword>
<keyword id="KW-1043">Host membrane</keyword>
<keyword id="KW-0945">Host-virus interaction</keyword>
<keyword id="KW-0472">Membrane</keyword>
<keyword id="KW-1161">Viral attachment to host cell</keyword>
<keyword id="KW-0261">Viral envelope protein</keyword>
<keyword id="KW-1162">Viral penetration into host cytoplasm</keyword>
<keyword id="KW-0946">Virion</keyword>
<keyword id="KW-0843">Virulence</keyword>
<keyword id="KW-1164">Virus endocytosis by host</keyword>
<keyword id="KW-1160">Virus entry into host cell</keyword>
<feature type="chain" id="PRO_0000037179" description="Spike glycoprotein">
    <location>
        <begin position="1"/>
        <end position="520" status="greater than"/>
    </location>
</feature>
<feature type="chain" id="PRO_0000037180" description="Spike protein S1" evidence="2">
    <location>
        <begin position="1"/>
        <end position="520"/>
    </location>
</feature>
<feature type="topological domain" description="Extracellular" evidence="2">
    <location>
        <begin position="1" status="less than"/>
        <end position="520" status="greater than"/>
    </location>
</feature>
<feature type="glycosylation site" description="N-linked (GlcNAc...) asparagine; by host" evidence="2">
    <location>
        <position position="5"/>
    </location>
</feature>
<feature type="glycosylation site" description="N-linked (GlcNAc...) asparagine; by host" evidence="2">
    <location>
        <position position="33"/>
    </location>
</feature>
<feature type="glycosylation site" description="N-linked (GlcNAc...) asparagine; by host" evidence="2">
    <location>
        <position position="56"/>
    </location>
</feature>
<feature type="glycosylation site" description="N-linked (GlcNAc...) asparagine; by host" evidence="2">
    <location>
        <position position="84"/>
    </location>
</feature>
<feature type="glycosylation site" description="N-linked (GlcNAc...) asparagine; by host" evidence="2">
    <location>
        <position position="121"/>
    </location>
</feature>
<feature type="glycosylation site" description="N-linked (GlcNAc...) asparagine; by host" evidence="2">
    <location>
        <position position="127"/>
    </location>
</feature>
<feature type="glycosylation site" description="N-linked (GlcNAc...) asparagine; by host" evidence="2">
    <location>
        <position position="146"/>
    </location>
</feature>
<feature type="glycosylation site" description="N-linked (GlcNAc...) asparagine; by host" evidence="2">
    <location>
        <position position="161"/>
    </location>
</feature>
<feature type="glycosylation site" description="N-linked (GlcNAc...) asparagine; by host" evidence="2">
    <location>
        <position position="195"/>
    </location>
</feature>
<feature type="glycosylation site" description="N-linked (GlcNAc...) asparagine; by host" evidence="2">
    <location>
        <position position="220"/>
    </location>
</feature>
<feature type="glycosylation site" description="N-linked (GlcNAc...) asparagine; by host" evidence="2">
    <location>
        <position position="230"/>
    </location>
</feature>
<feature type="glycosylation site" description="N-linked (GlcNAc...) asparagine; by host" evidence="2">
    <location>
        <position position="247"/>
    </location>
</feature>
<feature type="glycosylation site" description="N-linked (GlcNAc...) asparagine; by host" evidence="2">
    <location>
        <position position="254"/>
    </location>
</feature>
<feature type="glycosylation site" description="N-linked (GlcNAc...) asparagine; by host" evidence="2">
    <location>
        <position position="259"/>
    </location>
</feature>
<feature type="glycosylation site" description="N-linked (GlcNAc...) asparagine; by host" evidence="2">
    <location>
        <position position="289"/>
    </location>
</feature>
<feature type="glycosylation site" description="N-linked (GlcNAc...) asparagine; by host" evidence="2">
    <location>
        <position position="408"/>
    </location>
</feature>
<feature type="glycosylation site" description="N-linked (GlcNAc...) asparagine; by host" evidence="2">
    <location>
        <position position="430"/>
    </location>
</feature>
<feature type="glycosylation site" description="N-linked (GlcNAc...) asparagine; by host" evidence="2">
    <location>
        <position position="496"/>
    </location>
</feature>
<feature type="glycosylation site" description="N-linked (GlcNAc...) asparagine; by host" evidence="2">
    <location>
        <position position="513"/>
    </location>
</feature>
<feature type="non-terminal residue">
    <location>
        <position position="1"/>
    </location>
</feature>
<feature type="non-terminal residue">
    <location>
        <position position="520"/>
    </location>
</feature>
<organism>
    <name type="scientific">Avian infectious bronchitis virus (strain UK/142/86)</name>
    <name type="common">IBV</name>
    <dbReference type="NCBI Taxonomy" id="31627"/>
    <lineage>
        <taxon>Viruses</taxon>
        <taxon>Riboviria</taxon>
        <taxon>Orthornavirae</taxon>
        <taxon>Pisuviricota</taxon>
        <taxon>Pisoniviricetes</taxon>
        <taxon>Nidovirales</taxon>
        <taxon>Cornidovirineae</taxon>
        <taxon>Coronaviridae</taxon>
        <taxon>Orthocoronavirinae</taxon>
        <taxon>Gammacoronavirus</taxon>
        <taxon>Igacovirus</taxon>
        <taxon>Avian coronavirus</taxon>
    </lineage>
</organism>